<evidence type="ECO:0000255" key="1"/>
<evidence type="ECO:0000305" key="2"/>
<name>Y2876_MYCTU</name>
<dbReference type="EMBL" id="AF189006">
    <property type="protein sequence ID" value="AAF13403.1"/>
    <property type="molecule type" value="Genomic_DNA"/>
</dbReference>
<dbReference type="EMBL" id="AL123456">
    <property type="protein sequence ID" value="CCP45678.1"/>
    <property type="molecule type" value="Genomic_DNA"/>
</dbReference>
<dbReference type="PIR" id="G70923">
    <property type="entry name" value="G70923"/>
</dbReference>
<dbReference type="RefSeq" id="NP_217392.1">
    <property type="nucleotide sequence ID" value="NC_000962.3"/>
</dbReference>
<dbReference type="RefSeq" id="WP_003899522.1">
    <property type="nucleotide sequence ID" value="NC_000962.3"/>
</dbReference>
<dbReference type="SMR" id="P9WL39"/>
<dbReference type="STRING" id="83332.Rv2876"/>
<dbReference type="PaxDb" id="83332-Rv2876"/>
<dbReference type="DNASU" id="887823"/>
<dbReference type="GeneID" id="887823"/>
<dbReference type="KEGG" id="mtu:Rv2876"/>
<dbReference type="KEGG" id="mtv:RVBD_2876"/>
<dbReference type="PATRIC" id="fig|83332.111.peg.3201"/>
<dbReference type="TubercuList" id="Rv2876"/>
<dbReference type="eggNOG" id="ENOG502ZVDD">
    <property type="taxonomic scope" value="Bacteria"/>
</dbReference>
<dbReference type="InParanoid" id="P9WL39"/>
<dbReference type="OrthoDB" id="3401220at2"/>
<dbReference type="Proteomes" id="UP000001584">
    <property type="component" value="Chromosome"/>
</dbReference>
<dbReference type="GO" id="GO:0005886">
    <property type="term" value="C:plasma membrane"/>
    <property type="evidence" value="ECO:0007669"/>
    <property type="project" value="UniProtKB-SubCell"/>
</dbReference>
<dbReference type="InterPro" id="IPR024341">
    <property type="entry name" value="DUF2631"/>
</dbReference>
<dbReference type="Pfam" id="PF10939">
    <property type="entry name" value="DUF2631"/>
    <property type="match status" value="1"/>
</dbReference>
<sequence length="104" mass="11805">MFGQWEFDVSPTGGIAVASTEVEHFAGSQHEVDTAEVPSAAWGWSRIDHRTWHIVGLCIFGFLLAMLRGNHVGHVEDWFLITFAAVVLFVLARDLWGRRRGWIR</sequence>
<reference key="1">
    <citation type="submission" date="1999-09" db="EMBL/GenBank/DDBJ databases">
        <title>Mycobacterium tuberculosis mpt83 and dipZ/thioredoxin genes are part of the same translational unit.</title>
        <authorList>
            <person name="Juarez M.D."/>
            <person name="Torres A."/>
            <person name="Bigi F."/>
            <person name="Espitia C."/>
        </authorList>
    </citation>
    <scope>NUCLEOTIDE SEQUENCE [GENOMIC DNA]</scope>
    <source>
        <strain>ATCC 25618 / H37Rv</strain>
    </source>
</reference>
<reference key="2">
    <citation type="journal article" date="1998" name="Nature">
        <title>Deciphering the biology of Mycobacterium tuberculosis from the complete genome sequence.</title>
        <authorList>
            <person name="Cole S.T."/>
            <person name="Brosch R."/>
            <person name="Parkhill J."/>
            <person name="Garnier T."/>
            <person name="Churcher C.M."/>
            <person name="Harris D.E."/>
            <person name="Gordon S.V."/>
            <person name="Eiglmeier K."/>
            <person name="Gas S."/>
            <person name="Barry C.E. III"/>
            <person name="Tekaia F."/>
            <person name="Badcock K."/>
            <person name="Basham D."/>
            <person name="Brown D."/>
            <person name="Chillingworth T."/>
            <person name="Connor R."/>
            <person name="Davies R.M."/>
            <person name="Devlin K."/>
            <person name="Feltwell T."/>
            <person name="Gentles S."/>
            <person name="Hamlin N."/>
            <person name="Holroyd S."/>
            <person name="Hornsby T."/>
            <person name="Jagels K."/>
            <person name="Krogh A."/>
            <person name="McLean J."/>
            <person name="Moule S."/>
            <person name="Murphy L.D."/>
            <person name="Oliver S."/>
            <person name="Osborne J."/>
            <person name="Quail M.A."/>
            <person name="Rajandream M.A."/>
            <person name="Rogers J."/>
            <person name="Rutter S."/>
            <person name="Seeger K."/>
            <person name="Skelton S."/>
            <person name="Squares S."/>
            <person name="Squares R."/>
            <person name="Sulston J.E."/>
            <person name="Taylor K."/>
            <person name="Whitehead S."/>
            <person name="Barrell B.G."/>
        </authorList>
    </citation>
    <scope>NUCLEOTIDE SEQUENCE [LARGE SCALE GENOMIC DNA]</scope>
    <source>
        <strain>ATCC 25618 / H37Rv</strain>
    </source>
</reference>
<protein>
    <recommendedName>
        <fullName>Uncharacterized protein Rv2876</fullName>
    </recommendedName>
</protein>
<proteinExistence type="predicted"/>
<gene>
    <name type="ordered locus">Rv2876</name>
    <name type="ORF">MTCY274.07</name>
</gene>
<accession>P9WL39</accession>
<accession>L0TDM5</accession>
<accession>Q10802</accession>
<comment type="subcellular location">
    <subcellularLocation>
        <location evidence="2">Cell membrane</location>
        <topology evidence="2">Multi-pass membrane protein</topology>
    </subcellularLocation>
</comment>
<comment type="similarity">
    <text evidence="2">To M.leprae ML1584.</text>
</comment>
<organism>
    <name type="scientific">Mycobacterium tuberculosis (strain ATCC 25618 / H37Rv)</name>
    <dbReference type="NCBI Taxonomy" id="83332"/>
    <lineage>
        <taxon>Bacteria</taxon>
        <taxon>Bacillati</taxon>
        <taxon>Actinomycetota</taxon>
        <taxon>Actinomycetes</taxon>
        <taxon>Mycobacteriales</taxon>
        <taxon>Mycobacteriaceae</taxon>
        <taxon>Mycobacterium</taxon>
        <taxon>Mycobacterium tuberculosis complex</taxon>
    </lineage>
</organism>
<feature type="chain" id="PRO_0000104089" description="Uncharacterized protein Rv2876">
    <location>
        <begin position="1"/>
        <end position="104"/>
    </location>
</feature>
<feature type="transmembrane region" description="Helical" evidence="1">
    <location>
        <begin position="47"/>
        <end position="67"/>
    </location>
</feature>
<feature type="transmembrane region" description="Helical" evidence="1">
    <location>
        <begin position="72"/>
        <end position="92"/>
    </location>
</feature>
<keyword id="KW-1003">Cell membrane</keyword>
<keyword id="KW-0472">Membrane</keyword>
<keyword id="KW-1185">Reference proteome</keyword>
<keyword id="KW-0812">Transmembrane</keyword>
<keyword id="KW-1133">Transmembrane helix</keyword>